<evidence type="ECO:0000255" key="1">
    <source>
        <dbReference type="HAMAP-Rule" id="MF_00823"/>
    </source>
</evidence>
<evidence type="ECO:0000255" key="2">
    <source>
        <dbReference type="PROSITE-ProRule" id="PRU01137"/>
    </source>
</evidence>
<dbReference type="EC" id="2.1.3.15" evidence="1"/>
<dbReference type="EMBL" id="CP001019">
    <property type="protein sequence ID" value="ACJ17920.1"/>
    <property type="molecule type" value="Genomic_DNA"/>
</dbReference>
<dbReference type="RefSeq" id="WP_005772042.1">
    <property type="nucleotide sequence ID" value="NC_011527.1"/>
</dbReference>
<dbReference type="SMR" id="B6IYZ2"/>
<dbReference type="KEGG" id="cbg:CbuG_0499"/>
<dbReference type="HOGENOM" id="CLU_015486_0_2_6"/>
<dbReference type="UniPathway" id="UPA00655">
    <property type="reaction ID" value="UER00711"/>
</dbReference>
<dbReference type="GO" id="GO:0009317">
    <property type="term" value="C:acetyl-CoA carboxylase complex"/>
    <property type="evidence" value="ECO:0007669"/>
    <property type="project" value="InterPro"/>
</dbReference>
<dbReference type="GO" id="GO:0003989">
    <property type="term" value="F:acetyl-CoA carboxylase activity"/>
    <property type="evidence" value="ECO:0007669"/>
    <property type="project" value="InterPro"/>
</dbReference>
<dbReference type="GO" id="GO:0005524">
    <property type="term" value="F:ATP binding"/>
    <property type="evidence" value="ECO:0007669"/>
    <property type="project" value="UniProtKB-KW"/>
</dbReference>
<dbReference type="GO" id="GO:0016743">
    <property type="term" value="F:carboxyl- or carbamoyltransferase activity"/>
    <property type="evidence" value="ECO:0007669"/>
    <property type="project" value="UniProtKB-UniRule"/>
</dbReference>
<dbReference type="GO" id="GO:0006633">
    <property type="term" value="P:fatty acid biosynthetic process"/>
    <property type="evidence" value="ECO:0007669"/>
    <property type="project" value="UniProtKB-KW"/>
</dbReference>
<dbReference type="GO" id="GO:2001295">
    <property type="term" value="P:malonyl-CoA biosynthetic process"/>
    <property type="evidence" value="ECO:0007669"/>
    <property type="project" value="UniProtKB-UniRule"/>
</dbReference>
<dbReference type="Gene3D" id="3.90.226.10">
    <property type="entry name" value="2-enoyl-CoA Hydratase, Chain A, domain 1"/>
    <property type="match status" value="1"/>
</dbReference>
<dbReference type="HAMAP" id="MF_00823">
    <property type="entry name" value="AcetylCoA_CT_alpha"/>
    <property type="match status" value="1"/>
</dbReference>
<dbReference type="InterPro" id="IPR001095">
    <property type="entry name" value="Acetyl_CoA_COase_a_su"/>
</dbReference>
<dbReference type="InterPro" id="IPR029045">
    <property type="entry name" value="ClpP/crotonase-like_dom_sf"/>
</dbReference>
<dbReference type="InterPro" id="IPR011763">
    <property type="entry name" value="COA_CT_C"/>
</dbReference>
<dbReference type="NCBIfam" id="TIGR00513">
    <property type="entry name" value="accA"/>
    <property type="match status" value="1"/>
</dbReference>
<dbReference type="NCBIfam" id="NF041504">
    <property type="entry name" value="AccA_sub"/>
    <property type="match status" value="1"/>
</dbReference>
<dbReference type="NCBIfam" id="NF004344">
    <property type="entry name" value="PRK05724.1"/>
    <property type="match status" value="1"/>
</dbReference>
<dbReference type="PANTHER" id="PTHR42853">
    <property type="entry name" value="ACETYL-COENZYME A CARBOXYLASE CARBOXYL TRANSFERASE SUBUNIT ALPHA"/>
    <property type="match status" value="1"/>
</dbReference>
<dbReference type="PANTHER" id="PTHR42853:SF3">
    <property type="entry name" value="ACETYL-COENZYME A CARBOXYLASE CARBOXYL TRANSFERASE SUBUNIT ALPHA, CHLOROPLASTIC"/>
    <property type="match status" value="1"/>
</dbReference>
<dbReference type="Pfam" id="PF03255">
    <property type="entry name" value="ACCA"/>
    <property type="match status" value="1"/>
</dbReference>
<dbReference type="PRINTS" id="PR01069">
    <property type="entry name" value="ACCCTRFRASEA"/>
</dbReference>
<dbReference type="SUPFAM" id="SSF52096">
    <property type="entry name" value="ClpP/crotonase"/>
    <property type="match status" value="1"/>
</dbReference>
<dbReference type="PROSITE" id="PS50989">
    <property type="entry name" value="COA_CT_CTER"/>
    <property type="match status" value="1"/>
</dbReference>
<comment type="function">
    <text evidence="1">Component of the acetyl coenzyme A carboxylase (ACC) complex. First, biotin carboxylase catalyzes the carboxylation of biotin on its carrier protein (BCCP) and then the CO(2) group is transferred by the carboxyltransferase to acetyl-CoA to form malonyl-CoA.</text>
</comment>
<comment type="catalytic activity">
    <reaction evidence="1">
        <text>N(6)-carboxybiotinyl-L-lysyl-[protein] + acetyl-CoA = N(6)-biotinyl-L-lysyl-[protein] + malonyl-CoA</text>
        <dbReference type="Rhea" id="RHEA:54728"/>
        <dbReference type="Rhea" id="RHEA-COMP:10505"/>
        <dbReference type="Rhea" id="RHEA-COMP:10506"/>
        <dbReference type="ChEBI" id="CHEBI:57288"/>
        <dbReference type="ChEBI" id="CHEBI:57384"/>
        <dbReference type="ChEBI" id="CHEBI:83144"/>
        <dbReference type="ChEBI" id="CHEBI:83145"/>
        <dbReference type="EC" id="2.1.3.15"/>
    </reaction>
</comment>
<comment type="pathway">
    <text evidence="1">Lipid metabolism; malonyl-CoA biosynthesis; malonyl-CoA from acetyl-CoA: step 1/1.</text>
</comment>
<comment type="subunit">
    <text evidence="1">Acetyl-CoA carboxylase is a heterohexamer composed of biotin carboxyl carrier protein (AccB), biotin carboxylase (AccC) and two subunits each of ACCase subunit alpha (AccA) and ACCase subunit beta (AccD).</text>
</comment>
<comment type="subcellular location">
    <subcellularLocation>
        <location evidence="1">Cytoplasm</location>
    </subcellularLocation>
</comment>
<comment type="similarity">
    <text evidence="1">Belongs to the AccA family.</text>
</comment>
<proteinExistence type="inferred from homology"/>
<organism>
    <name type="scientific">Coxiella burnetii (strain CbuG_Q212)</name>
    <name type="common">Coxiella burnetii (strain Q212)</name>
    <dbReference type="NCBI Taxonomy" id="434923"/>
    <lineage>
        <taxon>Bacteria</taxon>
        <taxon>Pseudomonadati</taxon>
        <taxon>Pseudomonadota</taxon>
        <taxon>Gammaproteobacteria</taxon>
        <taxon>Legionellales</taxon>
        <taxon>Coxiellaceae</taxon>
        <taxon>Coxiella</taxon>
    </lineage>
</organism>
<reference key="1">
    <citation type="journal article" date="2009" name="Infect. Immun.">
        <title>Comparative genomics reveal extensive transposon-mediated genomic plasticity and diversity among potential effector proteins within the genus Coxiella.</title>
        <authorList>
            <person name="Beare P.A."/>
            <person name="Unsworth N."/>
            <person name="Andoh M."/>
            <person name="Voth D.E."/>
            <person name="Omsland A."/>
            <person name="Gilk S.D."/>
            <person name="Williams K.P."/>
            <person name="Sobral B.W."/>
            <person name="Kupko J.J. III"/>
            <person name="Porcella S.F."/>
            <person name="Samuel J.E."/>
            <person name="Heinzen R.A."/>
        </authorList>
    </citation>
    <scope>NUCLEOTIDE SEQUENCE [LARGE SCALE GENOMIC DNA]</scope>
    <source>
        <strain>CbuG_Q212</strain>
    </source>
</reference>
<name>ACCA_COXB2</name>
<keyword id="KW-0067">ATP-binding</keyword>
<keyword id="KW-0963">Cytoplasm</keyword>
<keyword id="KW-0275">Fatty acid biosynthesis</keyword>
<keyword id="KW-0276">Fatty acid metabolism</keyword>
<keyword id="KW-0444">Lipid biosynthesis</keyword>
<keyword id="KW-0443">Lipid metabolism</keyword>
<keyword id="KW-0547">Nucleotide-binding</keyword>
<keyword id="KW-0808">Transferase</keyword>
<sequence>MNLDYLDFEQPIAELQAKIDELRRVGTSQEINLTEEVNKLEEKNAQLTRQIFSNLTAQQIVQLARHPLRPYTLDYIQRIFTDFNELHGDRHYSQASAIIGGLARLNGEPVMVIGHQKGRTTQEKIYRNFGMARPEGFRKALRLMKLAERFSIPVITLIDTPGAYPGIGAEERNQSEAIARNLFEMAQLKIPIICTIIGEGCSGGALAIGVGDRTLMLQYAYYSVISPEGCASILWKSAEKAGEAAEALGLTANRLHELGLIDEIIKEPLGGAHRDTDAMAEKLKKHLQANLTNLQAKSANDLLEERYRRWLSYGKD</sequence>
<accession>B6IYZ2</accession>
<protein>
    <recommendedName>
        <fullName evidence="1">Acetyl-coenzyme A carboxylase carboxyl transferase subunit alpha</fullName>
        <shortName evidence="1">ACCase subunit alpha</shortName>
        <shortName evidence="1">Acetyl-CoA carboxylase carboxyltransferase subunit alpha</shortName>
        <ecNumber evidence="1">2.1.3.15</ecNumber>
    </recommendedName>
</protein>
<gene>
    <name evidence="1" type="primary">accA</name>
    <name type="ordered locus">CbuG_0499</name>
</gene>
<feature type="chain" id="PRO_1000134478" description="Acetyl-coenzyme A carboxylase carboxyl transferase subunit alpha">
    <location>
        <begin position="1"/>
        <end position="316"/>
    </location>
</feature>
<feature type="domain" description="CoA carboxyltransferase C-terminal" evidence="2">
    <location>
        <begin position="39"/>
        <end position="293"/>
    </location>
</feature>